<name>ODO2_STAAC</name>
<protein>
    <recommendedName>
        <fullName>Dihydrolipoyllysine-residue succinyltransferase component of 2-oxoglutarate dehydrogenase complex</fullName>
        <ecNumber evidence="2">2.3.1.61</ecNumber>
    </recommendedName>
    <alternativeName>
        <fullName>2-oxoglutarate dehydrogenase complex component E2</fullName>
        <shortName>OGDC-E2</shortName>
    </alternativeName>
    <alternativeName>
        <fullName>Dihydrolipoamide succinyltransferase component of 2-oxoglutarate dehydrogenase complex</fullName>
    </alternativeName>
</protein>
<evidence type="ECO:0000250" key="1"/>
<evidence type="ECO:0000250" key="2">
    <source>
        <dbReference type="UniProtKB" id="P0AFG6"/>
    </source>
</evidence>
<evidence type="ECO:0000255" key="3">
    <source>
        <dbReference type="PROSITE-ProRule" id="PRU01066"/>
    </source>
</evidence>
<evidence type="ECO:0000255" key="4">
    <source>
        <dbReference type="PROSITE-ProRule" id="PRU01170"/>
    </source>
</evidence>
<evidence type="ECO:0000256" key="5">
    <source>
        <dbReference type="SAM" id="MobiDB-lite"/>
    </source>
</evidence>
<evidence type="ECO:0000305" key="6"/>
<feature type="chain" id="PRO_0000288099" description="Dihydrolipoyllysine-residue succinyltransferase component of 2-oxoglutarate dehydrogenase complex">
    <location>
        <begin position="1"/>
        <end position="422"/>
    </location>
</feature>
<feature type="domain" description="Lipoyl-binding" evidence="3">
    <location>
        <begin position="1"/>
        <end position="76"/>
    </location>
</feature>
<feature type="domain" description="Peripheral subunit-binding (PSBD)" evidence="4">
    <location>
        <begin position="127"/>
        <end position="163"/>
    </location>
</feature>
<feature type="region of interest" description="Disordered" evidence="5">
    <location>
        <begin position="77"/>
        <end position="185"/>
    </location>
</feature>
<feature type="compositionally biased region" description="Polar residues" evidence="5">
    <location>
        <begin position="80"/>
        <end position="94"/>
    </location>
</feature>
<feature type="compositionally biased region" description="Polar residues" evidence="5">
    <location>
        <begin position="116"/>
        <end position="130"/>
    </location>
</feature>
<feature type="compositionally biased region" description="Basic and acidic residues" evidence="5">
    <location>
        <begin position="152"/>
        <end position="163"/>
    </location>
</feature>
<feature type="compositionally biased region" description="Low complexity" evidence="5">
    <location>
        <begin position="164"/>
        <end position="176"/>
    </location>
</feature>
<feature type="active site" evidence="2">
    <location>
        <position position="393"/>
    </location>
</feature>
<feature type="active site" evidence="2">
    <location>
        <position position="397"/>
    </location>
</feature>
<feature type="modified residue" description="N6-lipoyllysine" evidence="3">
    <location>
        <position position="42"/>
    </location>
</feature>
<organism>
    <name type="scientific">Staphylococcus aureus (strain COL)</name>
    <dbReference type="NCBI Taxonomy" id="93062"/>
    <lineage>
        <taxon>Bacteria</taxon>
        <taxon>Bacillati</taxon>
        <taxon>Bacillota</taxon>
        <taxon>Bacilli</taxon>
        <taxon>Bacillales</taxon>
        <taxon>Staphylococcaceae</taxon>
        <taxon>Staphylococcus</taxon>
    </lineage>
</organism>
<gene>
    <name type="primary">odhB</name>
    <name type="synonym">sucB</name>
    <name type="ordered locus">SACOL1448</name>
</gene>
<accession>Q5HG07</accession>
<reference key="1">
    <citation type="journal article" date="2005" name="J. Bacteriol.">
        <title>Insights on evolution of virulence and resistance from the complete genome analysis of an early methicillin-resistant Staphylococcus aureus strain and a biofilm-producing methicillin-resistant Staphylococcus epidermidis strain.</title>
        <authorList>
            <person name="Gill S.R."/>
            <person name="Fouts D.E."/>
            <person name="Archer G.L."/>
            <person name="Mongodin E.F."/>
            <person name="DeBoy R.T."/>
            <person name="Ravel J."/>
            <person name="Paulsen I.T."/>
            <person name="Kolonay J.F."/>
            <person name="Brinkac L.M."/>
            <person name="Beanan M.J."/>
            <person name="Dodson R.J."/>
            <person name="Daugherty S.C."/>
            <person name="Madupu R."/>
            <person name="Angiuoli S.V."/>
            <person name="Durkin A.S."/>
            <person name="Haft D.H."/>
            <person name="Vamathevan J.J."/>
            <person name="Khouri H."/>
            <person name="Utterback T.R."/>
            <person name="Lee C."/>
            <person name="Dimitrov G."/>
            <person name="Jiang L."/>
            <person name="Qin H."/>
            <person name="Weidman J."/>
            <person name="Tran K."/>
            <person name="Kang K.H."/>
            <person name="Hance I.R."/>
            <person name="Nelson K.E."/>
            <person name="Fraser C.M."/>
        </authorList>
    </citation>
    <scope>NUCLEOTIDE SEQUENCE [LARGE SCALE GENOMIC DNA]</scope>
    <source>
        <strain>COL</strain>
    </source>
</reference>
<keyword id="KW-0012">Acyltransferase</keyword>
<keyword id="KW-0450">Lipoyl</keyword>
<keyword id="KW-0808">Transferase</keyword>
<keyword id="KW-0816">Tricarboxylic acid cycle</keyword>
<proteinExistence type="inferred from homology"/>
<sequence length="422" mass="46673">MPEVKVPELAESITEGTIAEWLKNVGDSVEKGEAILELETDKVNVEVVSEEAGVLSEQLASEGDTVEVGQAIAIIGEGSGNASKENSNDNTPQQNEETNNKKEETTNNSVDKAEVNQANDDNQQRINATPSARRYARENGVNLAEVSPKTNDVVRKEDIDKKQQAPASTQTTQQASAKEEKKYNQYPTKPVIREKMSRRKKTAAKKLLEVSNNTAMLTTFNEVDMTNVMELRKRKKEQFMKDHDGTKLGFMSFFTKASVAALKKYPEVNAEIDGDDMITKQYYDIGVAVSTDDGLLVPFVRDCDKKNFAEIEAEIANLAVKAREKKLGLDDMVNGSFTITNGGIFGSMMSTPIINGNQAAILGMHSIITRPIAIDQDTIENRPMMYIALSYDHRIIDGKEAVGFLKTIKELIENPEDLLLES</sequence>
<comment type="function">
    <text evidence="2">E2 component of the 2-oxoglutarate dehydrogenase (OGDH) complex which catalyzes the second step in the conversion of 2-oxoglutarate to succinyl-CoA and CO(2).</text>
</comment>
<comment type="catalytic activity">
    <reaction evidence="2">
        <text>N(6)-[(R)-dihydrolipoyl]-L-lysyl-[protein] + succinyl-CoA = N(6)-[(R)-S(8)-succinyldihydrolipoyl]-L-lysyl-[protein] + CoA</text>
        <dbReference type="Rhea" id="RHEA:15213"/>
        <dbReference type="Rhea" id="RHEA-COMP:10475"/>
        <dbReference type="Rhea" id="RHEA-COMP:20092"/>
        <dbReference type="ChEBI" id="CHEBI:57287"/>
        <dbReference type="ChEBI" id="CHEBI:57292"/>
        <dbReference type="ChEBI" id="CHEBI:83100"/>
        <dbReference type="ChEBI" id="CHEBI:83120"/>
        <dbReference type="EC" id="2.3.1.61"/>
    </reaction>
</comment>
<comment type="cofactor">
    <cofactor evidence="1">
        <name>(R)-lipoate</name>
        <dbReference type="ChEBI" id="CHEBI:83088"/>
    </cofactor>
    <text evidence="1">Binds 1 lipoyl cofactor covalently.</text>
</comment>
<comment type="pathway">
    <text>Amino-acid degradation; L-lysine degradation via saccharopine pathway; glutaryl-CoA from L-lysine: step 6/6.</text>
</comment>
<comment type="subunit">
    <text evidence="2">Forms a 24-polypeptide structural core with octahedral symmetry. Part of the 2-oxoglutarate dehydrogenase (OGDH) complex composed of E1 (2-oxoglutarate dehydrogenase), E2 (dihydrolipoamide succinyltransferase) and E3 (dihydrolipoamide dehydrogenase); the complex contains multiple copies of the three enzymatic components (E1, E2 and E3).</text>
</comment>
<comment type="similarity">
    <text evidence="6">Belongs to the 2-oxoacid dehydrogenase family.</text>
</comment>
<dbReference type="EC" id="2.3.1.61" evidence="2"/>
<dbReference type="EMBL" id="CP000046">
    <property type="protein sequence ID" value="AAW38193.1"/>
    <property type="molecule type" value="Genomic_DNA"/>
</dbReference>
<dbReference type="RefSeq" id="WP_001115440.1">
    <property type="nucleotide sequence ID" value="NZ_JBGOFO010000003.1"/>
</dbReference>
<dbReference type="SMR" id="Q5HG07"/>
<dbReference type="KEGG" id="sac:SACOL1448"/>
<dbReference type="HOGENOM" id="CLU_016733_0_0_9"/>
<dbReference type="UniPathway" id="UPA00868">
    <property type="reaction ID" value="UER00840"/>
</dbReference>
<dbReference type="Proteomes" id="UP000000530">
    <property type="component" value="Chromosome"/>
</dbReference>
<dbReference type="GO" id="GO:0005829">
    <property type="term" value="C:cytosol"/>
    <property type="evidence" value="ECO:0007669"/>
    <property type="project" value="TreeGrafter"/>
</dbReference>
<dbReference type="GO" id="GO:0045252">
    <property type="term" value="C:oxoglutarate dehydrogenase complex"/>
    <property type="evidence" value="ECO:0007669"/>
    <property type="project" value="InterPro"/>
</dbReference>
<dbReference type="GO" id="GO:0004149">
    <property type="term" value="F:dihydrolipoyllysine-residue succinyltransferase activity"/>
    <property type="evidence" value="ECO:0007669"/>
    <property type="project" value="UniProtKB-EC"/>
</dbReference>
<dbReference type="GO" id="GO:0033512">
    <property type="term" value="P:L-lysine catabolic process to acetyl-CoA via saccharopine"/>
    <property type="evidence" value="ECO:0007669"/>
    <property type="project" value="UniProtKB-UniPathway"/>
</dbReference>
<dbReference type="GO" id="GO:0006099">
    <property type="term" value="P:tricarboxylic acid cycle"/>
    <property type="evidence" value="ECO:0007669"/>
    <property type="project" value="UniProtKB-KW"/>
</dbReference>
<dbReference type="CDD" id="cd06849">
    <property type="entry name" value="lipoyl_domain"/>
    <property type="match status" value="1"/>
</dbReference>
<dbReference type="FunFam" id="3.30.559.10:FF:000007">
    <property type="entry name" value="Dihydrolipoamide acetyltransferase component of pyruvate dehydrogenase complex"/>
    <property type="match status" value="1"/>
</dbReference>
<dbReference type="Gene3D" id="2.40.50.100">
    <property type="match status" value="1"/>
</dbReference>
<dbReference type="Gene3D" id="3.30.559.10">
    <property type="entry name" value="Chloramphenicol acetyltransferase-like domain"/>
    <property type="match status" value="1"/>
</dbReference>
<dbReference type="Gene3D" id="4.10.320.10">
    <property type="entry name" value="E3-binding domain"/>
    <property type="match status" value="1"/>
</dbReference>
<dbReference type="InterPro" id="IPR003016">
    <property type="entry name" value="2-oxoA_DH_lipoyl-BS"/>
</dbReference>
<dbReference type="InterPro" id="IPR050537">
    <property type="entry name" value="2-oxoacid_dehydrogenase"/>
</dbReference>
<dbReference type="InterPro" id="IPR001078">
    <property type="entry name" value="2-oxoacid_DH_actylTfrase"/>
</dbReference>
<dbReference type="InterPro" id="IPR000089">
    <property type="entry name" value="Biotin_lipoyl"/>
</dbReference>
<dbReference type="InterPro" id="IPR023213">
    <property type="entry name" value="CAT-like_dom_sf"/>
</dbReference>
<dbReference type="InterPro" id="IPR036625">
    <property type="entry name" value="E3-bd_dom_sf"/>
</dbReference>
<dbReference type="InterPro" id="IPR004167">
    <property type="entry name" value="PSBD"/>
</dbReference>
<dbReference type="InterPro" id="IPR011053">
    <property type="entry name" value="Single_hybrid_motif"/>
</dbReference>
<dbReference type="InterPro" id="IPR006255">
    <property type="entry name" value="SucB"/>
</dbReference>
<dbReference type="NCBIfam" id="NF004309">
    <property type="entry name" value="PRK05704.1"/>
    <property type="match status" value="1"/>
</dbReference>
<dbReference type="NCBIfam" id="TIGR01347">
    <property type="entry name" value="sucB"/>
    <property type="match status" value="1"/>
</dbReference>
<dbReference type="PANTHER" id="PTHR43416:SF5">
    <property type="entry name" value="DIHYDROLIPOYLLYSINE-RESIDUE SUCCINYLTRANSFERASE COMPONENT OF 2-OXOGLUTARATE DEHYDROGENASE COMPLEX, MITOCHONDRIAL"/>
    <property type="match status" value="1"/>
</dbReference>
<dbReference type="PANTHER" id="PTHR43416">
    <property type="entry name" value="DIHYDROLIPOYLLYSINE-RESIDUE SUCCINYLTRANSFERASE COMPONENT OF 2-OXOGLUTARATE DEHYDROGENASE COMPLEX, MITOCHONDRIAL-RELATED"/>
    <property type="match status" value="1"/>
</dbReference>
<dbReference type="Pfam" id="PF00198">
    <property type="entry name" value="2-oxoacid_dh"/>
    <property type="match status" value="1"/>
</dbReference>
<dbReference type="Pfam" id="PF00364">
    <property type="entry name" value="Biotin_lipoyl"/>
    <property type="match status" value="1"/>
</dbReference>
<dbReference type="Pfam" id="PF02817">
    <property type="entry name" value="E3_binding"/>
    <property type="match status" value="1"/>
</dbReference>
<dbReference type="SUPFAM" id="SSF52777">
    <property type="entry name" value="CoA-dependent acyltransferases"/>
    <property type="match status" value="1"/>
</dbReference>
<dbReference type="SUPFAM" id="SSF51230">
    <property type="entry name" value="Single hybrid motif"/>
    <property type="match status" value="1"/>
</dbReference>
<dbReference type="PROSITE" id="PS50968">
    <property type="entry name" value="BIOTINYL_LIPOYL"/>
    <property type="match status" value="1"/>
</dbReference>
<dbReference type="PROSITE" id="PS00189">
    <property type="entry name" value="LIPOYL"/>
    <property type="match status" value="1"/>
</dbReference>
<dbReference type="PROSITE" id="PS51826">
    <property type="entry name" value="PSBD"/>
    <property type="match status" value="1"/>
</dbReference>